<sequence>MDLARQIAMELLDIQAVYLRPQQPFTWASGVKSPIYTDNRVTLSYPETRTLIENGFVKQIQKHFPNVDIIAGTATAGIPHGAIIADKMNLPFAYIRSKAKDHGVGNQIEGRVYSGQKMVIIEDLISTGGSVLEAVTAAQSQGIEVLGVVAIFTYQLAKAEQAFREADIPLVTLTDYNQLIKVAKVNGYITADQLVLLKKFKEDQMNWQS</sequence>
<reference key="1">
    <citation type="journal article" date="2002" name="Mol. Microbiol.">
        <title>Genome sequence of Streptococcus agalactiae, a pathogen causing invasive neonatal disease.</title>
        <authorList>
            <person name="Glaser P."/>
            <person name="Rusniok C."/>
            <person name="Buchrieser C."/>
            <person name="Chevalier F."/>
            <person name="Frangeul L."/>
            <person name="Msadek T."/>
            <person name="Zouine M."/>
            <person name="Couve E."/>
            <person name="Lalioui L."/>
            <person name="Poyart C."/>
            <person name="Trieu-Cuot P."/>
            <person name="Kunst F."/>
        </authorList>
    </citation>
    <scope>NUCLEOTIDE SEQUENCE [LARGE SCALE GENOMIC DNA]</scope>
    <source>
        <strain>NEM316</strain>
    </source>
</reference>
<feature type="chain" id="PRO_0000110746" description="Orotate phosphoribosyltransferase">
    <location>
        <begin position="1"/>
        <end position="209"/>
    </location>
</feature>
<feature type="binding site" evidence="1">
    <location>
        <position position="96"/>
    </location>
    <ligand>
        <name>5-phospho-alpha-D-ribose 1-diphosphate</name>
        <dbReference type="ChEBI" id="CHEBI:58017"/>
        <note>ligand shared between dimeric partners</note>
    </ligand>
</feature>
<feature type="binding site" evidence="1">
    <location>
        <position position="100"/>
    </location>
    <ligand>
        <name>5-phospho-alpha-D-ribose 1-diphosphate</name>
        <dbReference type="ChEBI" id="CHEBI:58017"/>
        <note>ligand shared between dimeric partners</note>
    </ligand>
</feature>
<feature type="binding site" evidence="1">
    <location>
        <position position="102"/>
    </location>
    <ligand>
        <name>5-phospho-alpha-D-ribose 1-diphosphate</name>
        <dbReference type="ChEBI" id="CHEBI:58017"/>
        <note>ligand shared between dimeric partners</note>
    </ligand>
</feature>
<feature type="binding site" description="in other chain" evidence="1">
    <location>
        <begin position="122"/>
        <end position="130"/>
    </location>
    <ligand>
        <name>5-phospho-alpha-D-ribose 1-diphosphate</name>
        <dbReference type="ChEBI" id="CHEBI:58017"/>
        <note>ligand shared between dimeric partners</note>
    </ligand>
</feature>
<feature type="binding site" evidence="1">
    <location>
        <position position="126"/>
    </location>
    <ligand>
        <name>orotate</name>
        <dbReference type="ChEBI" id="CHEBI:30839"/>
    </ligand>
</feature>
<proteinExistence type="inferred from homology"/>
<comment type="function">
    <text evidence="1">Catalyzes the transfer of a ribosyl phosphate group from 5-phosphoribose 1-diphosphate to orotate, leading to the formation of orotidine monophosphate (OMP).</text>
</comment>
<comment type="catalytic activity">
    <reaction evidence="1">
        <text>orotidine 5'-phosphate + diphosphate = orotate + 5-phospho-alpha-D-ribose 1-diphosphate</text>
        <dbReference type="Rhea" id="RHEA:10380"/>
        <dbReference type="ChEBI" id="CHEBI:30839"/>
        <dbReference type="ChEBI" id="CHEBI:33019"/>
        <dbReference type="ChEBI" id="CHEBI:57538"/>
        <dbReference type="ChEBI" id="CHEBI:58017"/>
        <dbReference type="EC" id="2.4.2.10"/>
    </reaction>
</comment>
<comment type="cofactor">
    <cofactor evidence="1">
        <name>Mg(2+)</name>
        <dbReference type="ChEBI" id="CHEBI:18420"/>
    </cofactor>
</comment>
<comment type="pathway">
    <text evidence="1">Pyrimidine metabolism; UMP biosynthesis via de novo pathway; UMP from orotate: step 1/2.</text>
</comment>
<comment type="subunit">
    <text evidence="1">Homodimer.</text>
</comment>
<comment type="similarity">
    <text evidence="1">Belongs to the purine/pyrimidine phosphoribosyltransferase family. PyrE subfamily.</text>
</comment>
<evidence type="ECO:0000255" key="1">
    <source>
        <dbReference type="HAMAP-Rule" id="MF_01208"/>
    </source>
</evidence>
<gene>
    <name evidence="1" type="primary">pyrE</name>
    <name type="ordered locus">gbs1081</name>
</gene>
<protein>
    <recommendedName>
        <fullName evidence="1">Orotate phosphoribosyltransferase</fullName>
        <shortName evidence="1">OPRT</shortName>
        <shortName evidence="1">OPRTase</shortName>
        <ecNumber evidence="1">2.4.2.10</ecNumber>
    </recommendedName>
</protein>
<dbReference type="EC" id="2.4.2.10" evidence="1"/>
<dbReference type="EMBL" id="AL766848">
    <property type="protein sequence ID" value="CAD46740.1"/>
    <property type="molecule type" value="Genomic_DNA"/>
</dbReference>
<dbReference type="RefSeq" id="WP_000362328.1">
    <property type="nucleotide sequence ID" value="NC_004368.1"/>
</dbReference>
<dbReference type="SMR" id="P65917"/>
<dbReference type="GeneID" id="66885975"/>
<dbReference type="KEGG" id="san:pyrE"/>
<dbReference type="eggNOG" id="COG0461">
    <property type="taxonomic scope" value="Bacteria"/>
</dbReference>
<dbReference type="HOGENOM" id="CLU_074878_1_1_9"/>
<dbReference type="UniPathway" id="UPA00070">
    <property type="reaction ID" value="UER00119"/>
</dbReference>
<dbReference type="Proteomes" id="UP000000823">
    <property type="component" value="Chromosome"/>
</dbReference>
<dbReference type="GO" id="GO:0000287">
    <property type="term" value="F:magnesium ion binding"/>
    <property type="evidence" value="ECO:0007669"/>
    <property type="project" value="UniProtKB-UniRule"/>
</dbReference>
<dbReference type="GO" id="GO:0004588">
    <property type="term" value="F:orotate phosphoribosyltransferase activity"/>
    <property type="evidence" value="ECO:0007669"/>
    <property type="project" value="UniProtKB-UniRule"/>
</dbReference>
<dbReference type="GO" id="GO:0044205">
    <property type="term" value="P:'de novo' UMP biosynthetic process"/>
    <property type="evidence" value="ECO:0007669"/>
    <property type="project" value="UniProtKB-UniRule"/>
</dbReference>
<dbReference type="GO" id="GO:0019856">
    <property type="term" value="P:pyrimidine nucleobase biosynthetic process"/>
    <property type="evidence" value="ECO:0007669"/>
    <property type="project" value="TreeGrafter"/>
</dbReference>
<dbReference type="CDD" id="cd06223">
    <property type="entry name" value="PRTases_typeI"/>
    <property type="match status" value="1"/>
</dbReference>
<dbReference type="Gene3D" id="3.40.50.2020">
    <property type="match status" value="1"/>
</dbReference>
<dbReference type="HAMAP" id="MF_01208">
    <property type="entry name" value="PyrE"/>
    <property type="match status" value="1"/>
</dbReference>
<dbReference type="InterPro" id="IPR023031">
    <property type="entry name" value="OPRT"/>
</dbReference>
<dbReference type="InterPro" id="IPR004467">
    <property type="entry name" value="Or_phspho_trans_dom"/>
</dbReference>
<dbReference type="InterPro" id="IPR000836">
    <property type="entry name" value="PRibTrfase_dom"/>
</dbReference>
<dbReference type="InterPro" id="IPR029057">
    <property type="entry name" value="PRTase-like"/>
</dbReference>
<dbReference type="NCBIfam" id="TIGR00336">
    <property type="entry name" value="pyrE"/>
    <property type="match status" value="1"/>
</dbReference>
<dbReference type="PANTHER" id="PTHR19278">
    <property type="entry name" value="OROTATE PHOSPHORIBOSYLTRANSFERASE"/>
    <property type="match status" value="1"/>
</dbReference>
<dbReference type="PANTHER" id="PTHR19278:SF9">
    <property type="entry name" value="URIDINE 5'-MONOPHOSPHATE SYNTHASE"/>
    <property type="match status" value="1"/>
</dbReference>
<dbReference type="Pfam" id="PF00156">
    <property type="entry name" value="Pribosyltran"/>
    <property type="match status" value="1"/>
</dbReference>
<dbReference type="SUPFAM" id="SSF53271">
    <property type="entry name" value="PRTase-like"/>
    <property type="match status" value="1"/>
</dbReference>
<dbReference type="PROSITE" id="PS00103">
    <property type="entry name" value="PUR_PYR_PR_TRANSFER"/>
    <property type="match status" value="1"/>
</dbReference>
<organism>
    <name type="scientific">Streptococcus agalactiae serotype III (strain NEM316)</name>
    <dbReference type="NCBI Taxonomy" id="211110"/>
    <lineage>
        <taxon>Bacteria</taxon>
        <taxon>Bacillati</taxon>
        <taxon>Bacillota</taxon>
        <taxon>Bacilli</taxon>
        <taxon>Lactobacillales</taxon>
        <taxon>Streptococcaceae</taxon>
        <taxon>Streptococcus</taxon>
    </lineage>
</organism>
<keyword id="KW-0328">Glycosyltransferase</keyword>
<keyword id="KW-0460">Magnesium</keyword>
<keyword id="KW-0665">Pyrimidine biosynthesis</keyword>
<keyword id="KW-0808">Transferase</keyword>
<accession>P65917</accession>
<accession>Q8DZQ3</accession>
<accession>Q8E5F1</accession>
<name>PYRE_STRA3</name>